<dbReference type="EMBL" id="AM114016">
    <property type="protein sequence ID" value="CAJ34940.1"/>
    <property type="molecule type" value="mRNA"/>
</dbReference>
<dbReference type="EMBL" id="DQ295886">
    <property type="protein sequence ID" value="ABC18317.1"/>
    <property type="molecule type" value="mRNA"/>
</dbReference>
<dbReference type="EMBL" id="AM261812">
    <property type="protein sequence ID" value="CAK12655.1"/>
    <property type="molecule type" value="Genomic_DNA"/>
</dbReference>
<dbReference type="GO" id="GO:0005576">
    <property type="term" value="C:extracellular region"/>
    <property type="evidence" value="ECO:0007669"/>
    <property type="project" value="UniProtKB-SubCell"/>
</dbReference>
<dbReference type="GO" id="GO:0090729">
    <property type="term" value="F:toxin activity"/>
    <property type="evidence" value="ECO:0007669"/>
    <property type="project" value="UniProtKB-KW"/>
</dbReference>
<dbReference type="Gene3D" id="4.10.70.10">
    <property type="entry name" value="Disintegrin domain"/>
    <property type="match status" value="1"/>
</dbReference>
<dbReference type="InterPro" id="IPR018358">
    <property type="entry name" value="Disintegrin_CS"/>
</dbReference>
<dbReference type="InterPro" id="IPR001762">
    <property type="entry name" value="Disintegrin_dom"/>
</dbReference>
<dbReference type="InterPro" id="IPR036436">
    <property type="entry name" value="Disintegrin_dom_sf"/>
</dbReference>
<dbReference type="PANTHER" id="PTHR11905">
    <property type="entry name" value="ADAM A DISINTEGRIN AND METALLOPROTEASE DOMAIN"/>
    <property type="match status" value="1"/>
</dbReference>
<dbReference type="PANTHER" id="PTHR11905:SF159">
    <property type="entry name" value="ADAM METALLOPROTEASE"/>
    <property type="match status" value="1"/>
</dbReference>
<dbReference type="Pfam" id="PF00200">
    <property type="entry name" value="Disintegrin"/>
    <property type="match status" value="1"/>
</dbReference>
<dbReference type="PRINTS" id="PR00289">
    <property type="entry name" value="DISINTEGRIN"/>
</dbReference>
<dbReference type="SMART" id="SM00050">
    <property type="entry name" value="DISIN"/>
    <property type="match status" value="1"/>
</dbReference>
<dbReference type="SUPFAM" id="SSF57552">
    <property type="entry name" value="Blood coagulation inhibitor (disintegrin)"/>
    <property type="match status" value="1"/>
</dbReference>
<dbReference type="PROSITE" id="PS00427">
    <property type="entry name" value="DISINTEGRIN_1"/>
    <property type="match status" value="1"/>
</dbReference>
<dbReference type="PROSITE" id="PS50214">
    <property type="entry name" value="DISINTEGRIN_2"/>
    <property type="match status" value="1"/>
</dbReference>
<feature type="signal peptide" evidence="2">
    <location>
        <begin position="1"/>
        <end position="20"/>
    </location>
</feature>
<feature type="propeptide" id="PRO_0000318185" evidence="4">
    <location>
        <begin position="21"/>
        <end position="46"/>
    </location>
</feature>
<feature type="chain" id="PRO_5000076856" description="Disintegrin lebein-2-alpha">
    <location>
        <begin position="47"/>
        <end position="111"/>
    </location>
</feature>
<feature type="propeptide" id="PRO_0000318186">
    <location>
        <begin position="112"/>
        <end position="128"/>
    </location>
</feature>
<feature type="domain" description="Disintegrin" evidence="3">
    <location>
        <begin position="47"/>
        <end position="111"/>
    </location>
</feature>
<feature type="short sequence motif" description="Cell attachment site; atypical (MLD)">
    <location>
        <begin position="89"/>
        <end position="91"/>
    </location>
</feature>
<feature type="disulfide bond" evidence="3">
    <location>
        <begin position="53"/>
        <end position="76"/>
    </location>
</feature>
<feature type="disulfide bond" description="Interchain (with C-? in subunit beta)" evidence="3">
    <location>
        <position position="54"/>
    </location>
</feature>
<feature type="disulfide bond" description="Interchain (with C-? in subunit beta)" evidence="3">
    <location>
        <position position="59"/>
    </location>
</feature>
<feature type="disulfide bond" evidence="3">
    <location>
        <begin position="67"/>
        <end position="73"/>
    </location>
</feature>
<feature type="disulfide bond" evidence="3">
    <location>
        <begin position="72"/>
        <end position="97"/>
    </location>
</feature>
<feature type="disulfide bond" evidence="3">
    <location>
        <begin position="85"/>
        <end position="104"/>
    </location>
</feature>
<feature type="sequence conflict" description="In Ref. 4; AA sequence." evidence="5" ref="4">
    <original>P</original>
    <variation>D</variation>
    <location>
        <position position="56"/>
    </location>
</feature>
<feature type="sequence conflict" description="In Ref. 2; ABC18317." evidence="5" ref="2">
    <original>I</original>
    <variation>V</variation>
    <location>
        <position position="100"/>
    </location>
</feature>
<feature type="sequence conflict" description="In Ref. 3; CAK12655." evidence="5" ref="3">
    <original>WKS</original>
    <variation>YKD</variation>
    <location>
        <begin position="109"/>
        <end position="111"/>
    </location>
</feature>
<feature type="sequence conflict" description="In Ref. 2; ABC18317." evidence="5" ref="2">
    <original>G</original>
    <variation>D</variation>
    <location>
        <position position="124"/>
    </location>
</feature>
<evidence type="ECO:0000250" key="1"/>
<evidence type="ECO:0000255" key="2"/>
<evidence type="ECO:0000255" key="3">
    <source>
        <dbReference type="PROSITE-ProRule" id="PRU00068"/>
    </source>
</evidence>
<evidence type="ECO:0000269" key="4">
    <source>
    </source>
</evidence>
<evidence type="ECO:0000305" key="5"/>
<evidence type="ECO:0000305" key="6">
    <source>
    </source>
</evidence>
<protein>
    <recommendedName>
        <fullName>Disintegrin lebein-2-alpha</fullName>
    </recommendedName>
    <alternativeName>
        <fullName>ML-(2,8,15)</fullName>
    </alternativeName>
    <alternativeName>
        <fullName>MS-I</fullName>
    </alternativeName>
    <alternativeName>
        <fullName>VLDA</fullName>
    </alternativeName>
    <alternativeName>
        <fullName>ml-G2</fullName>
    </alternativeName>
</protein>
<name>DID2A_MACLB</name>
<reference key="1">
    <citation type="journal article" date="2006" name="Biochem. J.">
        <title>Molecular cloning of disintegrins from Cerastes vipera and Macrovipera lebetina transmediterranea venom gland cDNA libraries: insight into the evolution of the snake venom integrin-inhibition system.</title>
        <authorList>
            <person name="Sanz L."/>
            <person name="Bazaa A."/>
            <person name="Marrakchi N."/>
            <person name="Perez A."/>
            <person name="Chenik M."/>
            <person name="Bel Lasfer Z."/>
            <person name="El Ayeb M."/>
            <person name="Calvete J.J."/>
        </authorList>
    </citation>
    <scope>NUCLEOTIDE SEQUENCE [MRNA]</scope>
    <scope>PROTEIN SEQUENCE OF 48-62; 64-86 AND 88-106</scope>
    <scope>IDENTIFICATION BY MASS SPECTROMETRY</scope>
    <source>
        <tissue>Venom</tissue>
        <tissue>Venom gland</tissue>
    </source>
</reference>
<reference key="2">
    <citation type="submission" date="2005-11" db="EMBL/GenBank/DDBJ databases">
        <title>Cloning of dimeric disintegrins from Vipera lebetina venom.</title>
        <authorList>
            <person name="Siigur E."/>
            <person name="Aaspollu A."/>
            <person name="Siigur J."/>
        </authorList>
    </citation>
    <scope>NUCLEOTIDE SEQUENCE [MRNA]</scope>
    <source>
        <tissue>Venom gland</tissue>
    </source>
</reference>
<reference key="3">
    <citation type="journal article" date="2007" name="J. Mol. Evol.">
        <title>Loss of introns along the evolutionary diversification pathway of snake venom disintegrins evidenced by sequence analysis of genomic DNA from Macrovipera lebetina transmediterranea and Echis ocellatus.</title>
        <authorList>
            <person name="Bazaa A."/>
            <person name="Juarez P."/>
            <person name="Marrakchi N."/>
            <person name="Bel Lasfer Z."/>
            <person name="El Ayeb M."/>
            <person name="Calvete J.J."/>
            <person name="Sanz L."/>
        </authorList>
    </citation>
    <scope>NUCLEOTIDE SEQUENCE [GENOMIC DNA] OF 47-111</scope>
</reference>
<reference key="4">
    <citation type="journal article" date="2003" name="J. Biol. Chem.">
        <title>Vipera lebetina venom contains two disintegrins inhibiting laminin-binding beta1 integrins.</title>
        <authorList>
            <person name="Eble J.A."/>
            <person name="Bruckner P."/>
            <person name="Mayer U."/>
        </authorList>
    </citation>
    <scope>PROTEIN SEQUENCE OF 47-57</scope>
    <scope>SUBUNIT</scope>
    <scope>FUNCTION</scope>
    <scope>MASS SPECTROMETRY</scope>
    <source>
        <tissue>Venom</tissue>
    </source>
</reference>
<organism>
    <name type="scientific">Macrovipera lebetinus</name>
    <name type="common">Levantine viper</name>
    <name type="synonym">Vipera lebetina</name>
    <dbReference type="NCBI Taxonomy" id="3148341"/>
    <lineage>
        <taxon>Eukaryota</taxon>
        <taxon>Metazoa</taxon>
        <taxon>Chordata</taxon>
        <taxon>Craniata</taxon>
        <taxon>Vertebrata</taxon>
        <taxon>Euteleostomi</taxon>
        <taxon>Lepidosauria</taxon>
        <taxon>Squamata</taxon>
        <taxon>Bifurcata</taxon>
        <taxon>Unidentata</taxon>
        <taxon>Episquamata</taxon>
        <taxon>Toxicofera</taxon>
        <taxon>Serpentes</taxon>
        <taxon>Colubroidea</taxon>
        <taxon>Viperidae</taxon>
        <taxon>Viperinae</taxon>
        <taxon>Macrovipera</taxon>
    </lineage>
</organism>
<accession>Q3BK13</accession>
<accession>Q1JRG8</accession>
<accession>Q2PXP4</accession>
<proteinExistence type="evidence at protein level"/>
<comment type="function">
    <text evidence="1 4">Inhibits ADP-induced human platelet aggregation. Antagonist of alpha-IIb/beta-3 (ITGA2B/ITGB3) (By similarity). Also avidly binds to the laminin-binding beta-1 integrins (alpha-3/beta-1 (ITGA3/ITGB1), alpha-6/beta-1 (ITGA6/ITGB1), and alpha-7/beta-1 (ITGA7/ITGB1)) in an RGD-independent manner.</text>
</comment>
<comment type="subunit">
    <text evidence="4">Heterodimer with subunit beta; disulfide-linked.</text>
</comment>
<comment type="subcellular location">
    <subcellularLocation>
        <location>Secreted</location>
    </subcellularLocation>
</comment>
<comment type="tissue specificity">
    <text>Expressed by the venom gland.</text>
</comment>
<comment type="mass spectrometry" mass="14735.0" method="MALDI" evidence="4">
    <text>Heterodimer.</text>
</comment>
<comment type="miscellaneous">
    <text evidence="6">Negative results: has no interaction with the collagen-binding alpha-1/beta-1 (ITGA1/ITGB1) and alpha-2/beta-1 (ITGA2/ITGB1) integrins.</text>
</comment>
<comment type="similarity">
    <text evidence="5">Belongs to the disintegrin family. Dimeric disintegrin subfamily.</text>
</comment>
<sequence length="128" mass="14020">MIQVLLVTICLAVFPFHGSSIILESGNVNDYEVVYPKKVTLLPTGAMNSANPCCDPITCKPRKGEHCVSGPCCRNCKFLNPGTICKRTMLDGLNDYCTGITSDCPRNPWKSEEDEMKWSATAKGSVLM</sequence>
<keyword id="KW-1217">Cell adhesion impairing toxin</keyword>
<keyword id="KW-0903">Direct protein sequencing</keyword>
<keyword id="KW-1015">Disulfide bond</keyword>
<keyword id="KW-1199">Hemostasis impairing toxin</keyword>
<keyword id="KW-1201">Platelet aggregation inhibiting toxin</keyword>
<keyword id="KW-0964">Secreted</keyword>
<keyword id="KW-0732">Signal</keyword>
<keyword id="KW-0800">Toxin</keyword>